<proteinExistence type="inferred from homology"/>
<dbReference type="EC" id="1.3.3.3" evidence="1"/>
<dbReference type="EMBL" id="BX548175">
    <property type="protein sequence ID" value="CAE21881.1"/>
    <property type="molecule type" value="Genomic_DNA"/>
</dbReference>
<dbReference type="SMR" id="Q7V568"/>
<dbReference type="KEGG" id="pmt:PMT_1706"/>
<dbReference type="eggNOG" id="COG0408">
    <property type="taxonomic scope" value="Bacteria"/>
</dbReference>
<dbReference type="HOGENOM" id="CLU_026169_0_1_3"/>
<dbReference type="UniPathway" id="UPA00251">
    <property type="reaction ID" value="UER00322"/>
</dbReference>
<dbReference type="Proteomes" id="UP000001423">
    <property type="component" value="Chromosome"/>
</dbReference>
<dbReference type="GO" id="GO:0005737">
    <property type="term" value="C:cytoplasm"/>
    <property type="evidence" value="ECO:0007669"/>
    <property type="project" value="UniProtKB-SubCell"/>
</dbReference>
<dbReference type="GO" id="GO:0004109">
    <property type="term" value="F:coproporphyrinogen oxidase activity"/>
    <property type="evidence" value="ECO:0007669"/>
    <property type="project" value="UniProtKB-UniRule"/>
</dbReference>
<dbReference type="GO" id="GO:0046872">
    <property type="term" value="F:metal ion binding"/>
    <property type="evidence" value="ECO:0007669"/>
    <property type="project" value="UniProtKB-KW"/>
</dbReference>
<dbReference type="GO" id="GO:0042803">
    <property type="term" value="F:protein homodimerization activity"/>
    <property type="evidence" value="ECO:0000250"/>
    <property type="project" value="UniProtKB"/>
</dbReference>
<dbReference type="GO" id="GO:0015995">
    <property type="term" value="P:chlorophyll biosynthetic process"/>
    <property type="evidence" value="ECO:0007669"/>
    <property type="project" value="UniProtKB-UniRule"/>
</dbReference>
<dbReference type="GO" id="GO:0006782">
    <property type="term" value="P:protoporphyrinogen IX biosynthetic process"/>
    <property type="evidence" value="ECO:0007669"/>
    <property type="project" value="UniProtKB-UniRule"/>
</dbReference>
<dbReference type="FunFam" id="3.40.1500.10:FF:000007">
    <property type="entry name" value="Oxygen-dependent coproporphyrinogen-III oxidase"/>
    <property type="match status" value="1"/>
</dbReference>
<dbReference type="Gene3D" id="3.40.1500.10">
    <property type="entry name" value="Coproporphyrinogen III oxidase, aerobic"/>
    <property type="match status" value="1"/>
</dbReference>
<dbReference type="HAMAP" id="MF_00333">
    <property type="entry name" value="Coprogen_oxidas"/>
    <property type="match status" value="1"/>
</dbReference>
<dbReference type="InterPro" id="IPR001260">
    <property type="entry name" value="Coprogen_oxidase_aer"/>
</dbReference>
<dbReference type="InterPro" id="IPR036406">
    <property type="entry name" value="Coprogen_oxidase_aer_sf"/>
</dbReference>
<dbReference type="InterPro" id="IPR018375">
    <property type="entry name" value="Coprogen_oxidase_CS"/>
</dbReference>
<dbReference type="NCBIfam" id="NF003727">
    <property type="entry name" value="PRK05330.1"/>
    <property type="match status" value="1"/>
</dbReference>
<dbReference type="PANTHER" id="PTHR10755">
    <property type="entry name" value="COPROPORPHYRINOGEN III OXIDASE, MITOCHONDRIAL"/>
    <property type="match status" value="1"/>
</dbReference>
<dbReference type="PANTHER" id="PTHR10755:SF0">
    <property type="entry name" value="OXYGEN-DEPENDENT COPROPORPHYRINOGEN-III OXIDASE, MITOCHONDRIAL"/>
    <property type="match status" value="1"/>
</dbReference>
<dbReference type="Pfam" id="PF01218">
    <property type="entry name" value="Coprogen_oxidas"/>
    <property type="match status" value="1"/>
</dbReference>
<dbReference type="PIRSF" id="PIRSF000166">
    <property type="entry name" value="Coproporphyri_ox"/>
    <property type="match status" value="1"/>
</dbReference>
<dbReference type="PRINTS" id="PR00073">
    <property type="entry name" value="COPRGNOXDASE"/>
</dbReference>
<dbReference type="SUPFAM" id="SSF102886">
    <property type="entry name" value="Coproporphyrinogen III oxidase"/>
    <property type="match status" value="1"/>
</dbReference>
<dbReference type="PROSITE" id="PS01021">
    <property type="entry name" value="COPROGEN_OXIDASE"/>
    <property type="match status" value="1"/>
</dbReference>
<organism>
    <name type="scientific">Prochlorococcus marinus (strain MIT 9313)</name>
    <dbReference type="NCBI Taxonomy" id="74547"/>
    <lineage>
        <taxon>Bacteria</taxon>
        <taxon>Bacillati</taxon>
        <taxon>Cyanobacteriota</taxon>
        <taxon>Cyanophyceae</taxon>
        <taxon>Synechococcales</taxon>
        <taxon>Prochlorococcaceae</taxon>
        <taxon>Prochlorococcus</taxon>
    </lineage>
</organism>
<gene>
    <name evidence="1" type="primary">hemF</name>
    <name type="ordered locus">PMT_1706</name>
</gene>
<accession>Q7V568</accession>
<keyword id="KW-0149">Chlorophyll biosynthesis</keyword>
<keyword id="KW-0963">Cytoplasm</keyword>
<keyword id="KW-0350">Heme biosynthesis</keyword>
<keyword id="KW-0479">Metal-binding</keyword>
<keyword id="KW-0560">Oxidoreductase</keyword>
<keyword id="KW-0627">Porphyrin biosynthesis</keyword>
<keyword id="KW-1185">Reference proteome</keyword>
<name>HEM6_PROMM</name>
<reference key="1">
    <citation type="journal article" date="2003" name="Nature">
        <title>Genome divergence in two Prochlorococcus ecotypes reflects oceanic niche differentiation.</title>
        <authorList>
            <person name="Rocap G."/>
            <person name="Larimer F.W."/>
            <person name="Lamerdin J.E."/>
            <person name="Malfatti S."/>
            <person name="Chain P."/>
            <person name="Ahlgren N.A."/>
            <person name="Arellano A."/>
            <person name="Coleman M."/>
            <person name="Hauser L."/>
            <person name="Hess W.R."/>
            <person name="Johnson Z.I."/>
            <person name="Land M.L."/>
            <person name="Lindell D."/>
            <person name="Post A.F."/>
            <person name="Regala W."/>
            <person name="Shah M."/>
            <person name="Shaw S.L."/>
            <person name="Steglich C."/>
            <person name="Sullivan M.B."/>
            <person name="Ting C.S."/>
            <person name="Tolonen A."/>
            <person name="Webb E.A."/>
            <person name="Zinser E.R."/>
            <person name="Chisholm S.W."/>
        </authorList>
    </citation>
    <scope>NUCLEOTIDE SEQUENCE [LARGE SCALE GENOMIC DNA]</scope>
    <source>
        <strain>MIT 9313</strain>
    </source>
</reference>
<sequence length="349" mass="39847">MGASENLGQGPPPPHSRKRARELVLGLQDEICNELESLDGGQSFRTDSWERPEGGGGRSKVMREGRVFEQGGVNFSEVHGEELPPSILNQRPEAKGHPWFATGTSMVLHPRNPYVPTIHLNYRYFEAGPVWWFGGGADLTPFYPYLEDARHFHRVHKQACDTVGPELHKVFKPWCDEYFYLKHRGETRGVGGIFYDYQDGSGVLYKGQNSEGPAAQVSRELGPHPKSWEQLFELAKACGKAFLPAYVPIVEKRQEQAYGDRERQFQLYRRGRYAEFNLVWDRGTIFGLQTNGRTESILMSLPPLARWEYGYVAPADSREALLTDLFTRPQNWFEDATLEERCRPHQAVD</sequence>
<evidence type="ECO:0000255" key="1">
    <source>
        <dbReference type="HAMAP-Rule" id="MF_00333"/>
    </source>
</evidence>
<evidence type="ECO:0000256" key="2">
    <source>
        <dbReference type="SAM" id="MobiDB-lite"/>
    </source>
</evidence>
<feature type="chain" id="PRO_0000109908" description="Oxygen-dependent coproporphyrinogen-III oxidase">
    <location>
        <begin position="1"/>
        <end position="349"/>
    </location>
</feature>
<feature type="region of interest" description="Disordered" evidence="2">
    <location>
        <begin position="1"/>
        <end position="21"/>
    </location>
</feature>
<feature type="region of interest" description="Disordered" evidence="2">
    <location>
        <begin position="37"/>
        <end position="60"/>
    </location>
</feature>
<feature type="region of interest" description="Important for dimerization" evidence="1">
    <location>
        <begin position="273"/>
        <end position="308"/>
    </location>
</feature>
<feature type="active site" description="Proton donor" evidence="1">
    <location>
        <position position="119"/>
    </location>
</feature>
<feature type="binding site" evidence="1">
    <location>
        <position position="105"/>
    </location>
    <ligand>
        <name>substrate</name>
    </ligand>
</feature>
<feature type="binding site" evidence="1">
    <location>
        <position position="109"/>
    </location>
    <ligand>
        <name>a divalent metal cation</name>
        <dbReference type="ChEBI" id="CHEBI:60240"/>
    </ligand>
</feature>
<feature type="binding site" evidence="1">
    <location>
        <position position="119"/>
    </location>
    <ligand>
        <name>a divalent metal cation</name>
        <dbReference type="ChEBI" id="CHEBI:60240"/>
    </ligand>
</feature>
<feature type="binding site" evidence="1">
    <location>
        <begin position="121"/>
        <end position="123"/>
    </location>
    <ligand>
        <name>substrate</name>
    </ligand>
</feature>
<feature type="binding site" evidence="1">
    <location>
        <position position="153"/>
    </location>
    <ligand>
        <name>a divalent metal cation</name>
        <dbReference type="ChEBI" id="CHEBI:60240"/>
    </ligand>
</feature>
<feature type="binding site" evidence="1">
    <location>
        <position position="183"/>
    </location>
    <ligand>
        <name>a divalent metal cation</name>
        <dbReference type="ChEBI" id="CHEBI:60240"/>
    </ligand>
</feature>
<feature type="site" description="Important for dimerization" evidence="1">
    <location>
        <position position="183"/>
    </location>
</feature>
<protein>
    <recommendedName>
        <fullName evidence="1">Oxygen-dependent coproporphyrinogen-III oxidase</fullName>
        <shortName evidence="1">CPO</shortName>
        <shortName evidence="1">Coprogen oxidase</shortName>
        <shortName evidence="1">Coproporphyrinogenase</shortName>
        <ecNumber evidence="1">1.3.3.3</ecNumber>
    </recommendedName>
</protein>
<comment type="function">
    <text evidence="1">Involved in the heme and chlorophyll biosynthesis. Catalyzes the aerobic oxidative decarboxylation of propionate groups of rings A and B of coproporphyrinogen-III to yield the vinyl groups in protoporphyrinogen-IX.</text>
</comment>
<comment type="catalytic activity">
    <reaction evidence="1">
        <text>coproporphyrinogen III + O2 + 2 H(+) = protoporphyrinogen IX + 2 CO2 + 2 H2O</text>
        <dbReference type="Rhea" id="RHEA:18257"/>
        <dbReference type="ChEBI" id="CHEBI:15377"/>
        <dbReference type="ChEBI" id="CHEBI:15378"/>
        <dbReference type="ChEBI" id="CHEBI:15379"/>
        <dbReference type="ChEBI" id="CHEBI:16526"/>
        <dbReference type="ChEBI" id="CHEBI:57307"/>
        <dbReference type="ChEBI" id="CHEBI:57309"/>
        <dbReference type="EC" id="1.3.3.3"/>
    </reaction>
</comment>
<comment type="cofactor">
    <cofactor evidence="1">
        <name>a divalent metal cation</name>
        <dbReference type="ChEBI" id="CHEBI:60240"/>
    </cofactor>
</comment>
<comment type="pathway">
    <text evidence="1">Porphyrin-containing compound metabolism; protoporphyrin-IX biosynthesis; protoporphyrinogen-IX from coproporphyrinogen-III (O2 route): step 1/1.</text>
</comment>
<comment type="subunit">
    <text evidence="1">Homodimer.</text>
</comment>
<comment type="subcellular location">
    <subcellularLocation>
        <location evidence="1">Cytoplasm</location>
    </subcellularLocation>
</comment>
<comment type="similarity">
    <text evidence="1">Belongs to the aerobic coproporphyrinogen-III oxidase family.</text>
</comment>